<feature type="chain" id="PRO_0000356129" description="Pentatricopeptide repeat-containing protein At3g48810">
    <location>
        <begin position="1"/>
        <end position="659"/>
    </location>
</feature>
<feature type="repeat" description="PPR 1">
    <location>
        <begin position="75"/>
        <end position="109"/>
    </location>
</feature>
<feature type="repeat" description="PPR 2">
    <location>
        <begin position="110"/>
        <end position="144"/>
    </location>
</feature>
<feature type="repeat" description="PPR 3">
    <location>
        <begin position="145"/>
        <end position="179"/>
    </location>
</feature>
<feature type="repeat" description="PPR 4">
    <location>
        <begin position="180"/>
        <end position="214"/>
    </location>
</feature>
<feature type="repeat" description="PPR 5">
    <location>
        <begin position="215"/>
        <end position="243"/>
    </location>
</feature>
<feature type="repeat" description="PPR 6">
    <location>
        <begin position="245"/>
        <end position="279"/>
    </location>
</feature>
<feature type="repeat" description="PPR 7">
    <location>
        <begin position="280"/>
        <end position="314"/>
    </location>
</feature>
<feature type="repeat" description="PPR 8">
    <location>
        <begin position="315"/>
        <end position="350"/>
    </location>
</feature>
<feature type="repeat" description="PPR 9">
    <location>
        <begin position="351"/>
        <end position="385"/>
    </location>
</feature>
<feature type="repeat" description="PPR 10">
    <location>
        <begin position="386"/>
        <end position="420"/>
    </location>
</feature>
<feature type="repeat" description="PPR 11">
    <location>
        <begin position="421"/>
        <end position="455"/>
    </location>
</feature>
<feature type="repeat" description="PPR 12">
    <location>
        <begin position="456"/>
        <end position="490"/>
    </location>
</feature>
<feature type="repeat" description="PPR 13">
    <location>
        <begin position="492"/>
        <end position="526"/>
    </location>
</feature>
<feature type="repeat" description="PPR 14">
    <location>
        <begin position="527"/>
        <end position="561"/>
    </location>
</feature>
<feature type="repeat" description="PPR 15">
    <location>
        <begin position="562"/>
        <end position="598"/>
    </location>
</feature>
<feature type="repeat" description="PPR 16">
    <location>
        <begin position="599"/>
        <end position="633"/>
    </location>
</feature>
<reference key="1">
    <citation type="journal article" date="2000" name="Nature">
        <title>Sequence and analysis of chromosome 3 of the plant Arabidopsis thaliana.</title>
        <authorList>
            <person name="Salanoubat M."/>
            <person name="Lemcke K."/>
            <person name="Rieger M."/>
            <person name="Ansorge W."/>
            <person name="Unseld M."/>
            <person name="Fartmann B."/>
            <person name="Valle G."/>
            <person name="Bloecker H."/>
            <person name="Perez-Alonso M."/>
            <person name="Obermaier B."/>
            <person name="Delseny M."/>
            <person name="Boutry M."/>
            <person name="Grivell L.A."/>
            <person name="Mache R."/>
            <person name="Puigdomenech P."/>
            <person name="De Simone V."/>
            <person name="Choisne N."/>
            <person name="Artiguenave F."/>
            <person name="Robert C."/>
            <person name="Brottier P."/>
            <person name="Wincker P."/>
            <person name="Cattolico L."/>
            <person name="Weissenbach J."/>
            <person name="Saurin W."/>
            <person name="Quetier F."/>
            <person name="Schaefer M."/>
            <person name="Mueller-Auer S."/>
            <person name="Gabel C."/>
            <person name="Fuchs M."/>
            <person name="Benes V."/>
            <person name="Wurmbach E."/>
            <person name="Drzonek H."/>
            <person name="Erfle H."/>
            <person name="Jordan N."/>
            <person name="Bangert S."/>
            <person name="Wiedelmann R."/>
            <person name="Kranz H."/>
            <person name="Voss H."/>
            <person name="Holland R."/>
            <person name="Brandt P."/>
            <person name="Nyakatura G."/>
            <person name="Vezzi A."/>
            <person name="D'Angelo M."/>
            <person name="Pallavicini A."/>
            <person name="Toppo S."/>
            <person name="Simionati B."/>
            <person name="Conrad A."/>
            <person name="Hornischer K."/>
            <person name="Kauer G."/>
            <person name="Loehnert T.-H."/>
            <person name="Nordsiek G."/>
            <person name="Reichelt J."/>
            <person name="Scharfe M."/>
            <person name="Schoen O."/>
            <person name="Bargues M."/>
            <person name="Terol J."/>
            <person name="Climent J."/>
            <person name="Navarro P."/>
            <person name="Collado C."/>
            <person name="Perez-Perez A."/>
            <person name="Ottenwaelder B."/>
            <person name="Duchemin D."/>
            <person name="Cooke R."/>
            <person name="Laudie M."/>
            <person name="Berger-Llauro C."/>
            <person name="Purnelle B."/>
            <person name="Masuy D."/>
            <person name="de Haan M."/>
            <person name="Maarse A.C."/>
            <person name="Alcaraz J.-P."/>
            <person name="Cottet A."/>
            <person name="Casacuberta E."/>
            <person name="Monfort A."/>
            <person name="Argiriou A."/>
            <person name="Flores M."/>
            <person name="Liguori R."/>
            <person name="Vitale D."/>
            <person name="Mannhaupt G."/>
            <person name="Haase D."/>
            <person name="Schoof H."/>
            <person name="Rudd S."/>
            <person name="Zaccaria P."/>
            <person name="Mewes H.-W."/>
            <person name="Mayer K.F.X."/>
            <person name="Kaul S."/>
            <person name="Town C.D."/>
            <person name="Koo H.L."/>
            <person name="Tallon L.J."/>
            <person name="Jenkins J."/>
            <person name="Rooney T."/>
            <person name="Rizzo M."/>
            <person name="Walts A."/>
            <person name="Utterback T."/>
            <person name="Fujii C.Y."/>
            <person name="Shea T.P."/>
            <person name="Creasy T.H."/>
            <person name="Haas B."/>
            <person name="Maiti R."/>
            <person name="Wu D."/>
            <person name="Peterson J."/>
            <person name="Van Aken S."/>
            <person name="Pai G."/>
            <person name="Militscher J."/>
            <person name="Sellers P."/>
            <person name="Gill J.E."/>
            <person name="Feldblyum T.V."/>
            <person name="Preuss D."/>
            <person name="Lin X."/>
            <person name="Nierman W.C."/>
            <person name="Salzberg S.L."/>
            <person name="White O."/>
            <person name="Venter J.C."/>
            <person name="Fraser C.M."/>
            <person name="Kaneko T."/>
            <person name="Nakamura Y."/>
            <person name="Sato S."/>
            <person name="Kato T."/>
            <person name="Asamizu E."/>
            <person name="Sasamoto S."/>
            <person name="Kimura T."/>
            <person name="Idesawa K."/>
            <person name="Kawashima K."/>
            <person name="Kishida Y."/>
            <person name="Kiyokawa C."/>
            <person name="Kohara M."/>
            <person name="Matsumoto M."/>
            <person name="Matsuno A."/>
            <person name="Muraki A."/>
            <person name="Nakayama S."/>
            <person name="Nakazaki N."/>
            <person name="Shinpo S."/>
            <person name="Takeuchi C."/>
            <person name="Wada T."/>
            <person name="Watanabe A."/>
            <person name="Yamada M."/>
            <person name="Yasuda M."/>
            <person name="Tabata S."/>
        </authorList>
    </citation>
    <scope>NUCLEOTIDE SEQUENCE [LARGE SCALE GENOMIC DNA]</scope>
    <source>
        <strain>cv. Columbia</strain>
    </source>
</reference>
<reference key="2">
    <citation type="journal article" date="2017" name="Plant J.">
        <title>Araport11: a complete reannotation of the Arabidopsis thaliana reference genome.</title>
        <authorList>
            <person name="Cheng C.Y."/>
            <person name="Krishnakumar V."/>
            <person name="Chan A.P."/>
            <person name="Thibaud-Nissen F."/>
            <person name="Schobel S."/>
            <person name="Town C.D."/>
        </authorList>
    </citation>
    <scope>GENOME REANNOTATION</scope>
    <source>
        <strain>cv. Columbia</strain>
    </source>
</reference>
<reference key="3">
    <citation type="journal article" date="2004" name="Plant Cell">
        <title>Genome-wide analysis of Arabidopsis pentatricopeptide repeat proteins reveals their essential role in organelle biogenesis.</title>
        <authorList>
            <person name="Lurin C."/>
            <person name="Andres C."/>
            <person name="Aubourg S."/>
            <person name="Bellaoui M."/>
            <person name="Bitton F."/>
            <person name="Bruyere C."/>
            <person name="Caboche M."/>
            <person name="Debast C."/>
            <person name="Gualberto J."/>
            <person name="Hoffmann B."/>
            <person name="Lecharny A."/>
            <person name="Le Ret M."/>
            <person name="Martin-Magniette M.-L."/>
            <person name="Mireau H."/>
            <person name="Peeters N."/>
            <person name="Renou J.-P."/>
            <person name="Szurek B."/>
            <person name="Taconnat L."/>
            <person name="Small I."/>
        </authorList>
    </citation>
    <scope>GENE FAMILY</scope>
</reference>
<name>PP270_ARATH</name>
<evidence type="ECO:0000305" key="1"/>
<dbReference type="EMBL" id="AL132963">
    <property type="protein sequence ID" value="CAB87909.1"/>
    <property type="molecule type" value="Genomic_DNA"/>
</dbReference>
<dbReference type="EMBL" id="CP002686">
    <property type="protein sequence ID" value="AEE78458.1"/>
    <property type="molecule type" value="Genomic_DNA"/>
</dbReference>
<dbReference type="PIR" id="T49277">
    <property type="entry name" value="T49277"/>
</dbReference>
<dbReference type="RefSeq" id="NP_190450.1">
    <property type="nucleotide sequence ID" value="NM_114740.3"/>
</dbReference>
<dbReference type="SMR" id="Q9M302"/>
<dbReference type="FunCoup" id="Q9M302">
    <property type="interactions" value="130"/>
</dbReference>
<dbReference type="STRING" id="3702.Q9M302"/>
<dbReference type="PaxDb" id="3702-AT3G48810.1"/>
<dbReference type="EnsemblPlants" id="AT3G48810.1">
    <property type="protein sequence ID" value="AT3G48810.1"/>
    <property type="gene ID" value="AT3G48810"/>
</dbReference>
<dbReference type="GeneID" id="824042"/>
<dbReference type="Gramene" id="AT3G48810.1">
    <property type="protein sequence ID" value="AT3G48810.1"/>
    <property type="gene ID" value="AT3G48810"/>
</dbReference>
<dbReference type="KEGG" id="ath:AT3G48810"/>
<dbReference type="Araport" id="AT3G48810"/>
<dbReference type="TAIR" id="AT3G48810">
    <property type="gene designation" value="OTP439"/>
</dbReference>
<dbReference type="eggNOG" id="KOG4197">
    <property type="taxonomic scope" value="Eukaryota"/>
</dbReference>
<dbReference type="HOGENOM" id="CLU_002706_49_8_1"/>
<dbReference type="InParanoid" id="Q9M302"/>
<dbReference type="OMA" id="SETWNKM"/>
<dbReference type="PhylomeDB" id="Q9M302"/>
<dbReference type="PRO" id="PR:Q9M302"/>
<dbReference type="Proteomes" id="UP000006548">
    <property type="component" value="Chromosome 3"/>
</dbReference>
<dbReference type="ExpressionAtlas" id="Q9M302">
    <property type="expression patterns" value="baseline and differential"/>
</dbReference>
<dbReference type="GO" id="GO:0005739">
    <property type="term" value="C:mitochondrion"/>
    <property type="evidence" value="ECO:0000314"/>
    <property type="project" value="TAIR"/>
</dbReference>
<dbReference type="GO" id="GO:0000963">
    <property type="term" value="P:mitochondrial RNA processing"/>
    <property type="evidence" value="ECO:0000315"/>
    <property type="project" value="TAIR"/>
</dbReference>
<dbReference type="GO" id="GO:0008380">
    <property type="term" value="P:RNA splicing"/>
    <property type="evidence" value="ECO:0000315"/>
    <property type="project" value="TAIR"/>
</dbReference>
<dbReference type="Gene3D" id="1.25.40.10">
    <property type="entry name" value="Tetratricopeptide repeat domain"/>
    <property type="match status" value="6"/>
</dbReference>
<dbReference type="InterPro" id="IPR002885">
    <property type="entry name" value="Pentatricopeptide_rpt"/>
</dbReference>
<dbReference type="InterPro" id="IPR011990">
    <property type="entry name" value="TPR-like_helical_dom_sf"/>
</dbReference>
<dbReference type="NCBIfam" id="TIGR00756">
    <property type="entry name" value="PPR"/>
    <property type="match status" value="10"/>
</dbReference>
<dbReference type="PANTHER" id="PTHR47936:SF1">
    <property type="entry name" value="PENTATRICOPEPTIDE REPEAT-CONTAINING PROTEIN GUN1, CHLOROPLASTIC"/>
    <property type="match status" value="1"/>
</dbReference>
<dbReference type="PANTHER" id="PTHR47936">
    <property type="entry name" value="PPR_LONG DOMAIN-CONTAINING PROTEIN"/>
    <property type="match status" value="1"/>
</dbReference>
<dbReference type="Pfam" id="PF01535">
    <property type="entry name" value="PPR"/>
    <property type="match status" value="2"/>
</dbReference>
<dbReference type="Pfam" id="PF13041">
    <property type="entry name" value="PPR_2"/>
    <property type="match status" value="6"/>
</dbReference>
<dbReference type="Pfam" id="PF13812">
    <property type="entry name" value="PPR_3"/>
    <property type="match status" value="1"/>
</dbReference>
<dbReference type="SUPFAM" id="SSF81901">
    <property type="entry name" value="HCP-like"/>
    <property type="match status" value="1"/>
</dbReference>
<dbReference type="PROSITE" id="PS51375">
    <property type="entry name" value="PPR"/>
    <property type="match status" value="16"/>
</dbReference>
<protein>
    <recommendedName>
        <fullName>Pentatricopeptide repeat-containing protein At3g48810</fullName>
    </recommendedName>
</protein>
<accession>Q9M302</accession>
<keyword id="KW-1185">Reference proteome</keyword>
<keyword id="KW-0677">Repeat</keyword>
<sequence>MYLKEGCSLLLKVQKPLIPFVLNTNLNVNHLLTESPNHAEIKELDVVKRLRQESCVPLALHFFKSIANSNLFKHTPLTFEVMIRKLAMDGQVDSVQYLLQQMKLQGFHCSEDLFISVISVYRQVGLAERAVEMFYRIKEFGCDPSVKIYNHVLDTLLGENRIQMIYMVYRDMKRDGFEPNVFTYNVLLKALCKNNKVDGAKKLLVEMSNKGCCPDAVSYTTVISSMCEVGLVKEGRELAERFEPVVSVYNALINGLCKEHDYKGAFELMREMVEKGISPNVISYSTLINVLCNSGQIELAFSFLTQMLKRGCHPNIYTLSSLVKGCFLRGTTFDALDLWNQMIRGFGLQPNVVAYNTLVQGFCSHGNIVKAVSVFSHMEEIGCSPNIRTYGSLINGFAKRGSLDGAVYIWNKMLTSGCCPNVVVYTNMVEALCRHSKFKEAESLIEIMSKENCAPSVPTFNAFIKGLCDAGRLDWAEKVFRQMEQQHRCPPNIVTYNELLDGLAKANRIEEAYGLTREIFMRGVEWSSSTYNTLLHGSCNAGLPGIALQLVGKMMVDGKSPDEITMNMIILAYCKQGKAERAAQMLDLVSCGRRKWRPDVISYTNVIWGLCRSNCREDGVILLERMISAGIVPSIATWSVLINCFILDDIVRAHDQFTI</sequence>
<proteinExistence type="evidence at transcript level"/>
<gene>
    <name type="ordered locus">At3g48810</name>
    <name type="ORF">T21J18_80</name>
</gene>
<organism>
    <name type="scientific">Arabidopsis thaliana</name>
    <name type="common">Mouse-ear cress</name>
    <dbReference type="NCBI Taxonomy" id="3702"/>
    <lineage>
        <taxon>Eukaryota</taxon>
        <taxon>Viridiplantae</taxon>
        <taxon>Streptophyta</taxon>
        <taxon>Embryophyta</taxon>
        <taxon>Tracheophyta</taxon>
        <taxon>Spermatophyta</taxon>
        <taxon>Magnoliopsida</taxon>
        <taxon>eudicotyledons</taxon>
        <taxon>Gunneridae</taxon>
        <taxon>Pentapetalae</taxon>
        <taxon>rosids</taxon>
        <taxon>malvids</taxon>
        <taxon>Brassicales</taxon>
        <taxon>Brassicaceae</taxon>
        <taxon>Camelineae</taxon>
        <taxon>Arabidopsis</taxon>
    </lineage>
</organism>
<comment type="similarity">
    <text evidence="1">Belongs to the PPR family. P subfamily.</text>
</comment>
<comment type="online information" name="Pentatricopeptide repeat proteins">
    <link uri="https://ppr.plantenergy.uwa.edu.au"/>
</comment>